<keyword id="KW-0378">Hydrolase</keyword>
<keyword id="KW-0443">Lipid metabolism</keyword>
<keyword id="KW-0472">Membrane</keyword>
<keyword id="KW-1185">Reference proteome</keyword>
<keyword id="KW-0812">Transmembrane</keyword>
<keyword id="KW-1133">Transmembrane helix</keyword>
<gene>
    <name evidence="1" type="primary">ABHD16A</name>
    <name evidence="1" type="synonym">BAT5</name>
    <name evidence="5" type="ORF">QtsA-11941</name>
</gene>
<reference key="1">
    <citation type="submission" date="2005-06" db="EMBL/GenBank/DDBJ databases">
        <title>DNA sequences of macaque genes expressed in brain or testis and its evolutionary implications.</title>
        <authorList>
            <consortium name="International consortium for macaque cDNA sequencing and analysis"/>
        </authorList>
    </citation>
    <scope>NUCLEOTIDE SEQUENCE [LARGE SCALE MRNA]</scope>
    <source>
        <tissue>Testis</tissue>
    </source>
</reference>
<accession>Q4R8P0</accession>
<name>ABHGA_MACFA</name>
<organism>
    <name type="scientific">Macaca fascicularis</name>
    <name type="common">Crab-eating macaque</name>
    <name type="synonym">Cynomolgus monkey</name>
    <dbReference type="NCBI Taxonomy" id="9541"/>
    <lineage>
        <taxon>Eukaryota</taxon>
        <taxon>Metazoa</taxon>
        <taxon>Chordata</taxon>
        <taxon>Craniata</taxon>
        <taxon>Vertebrata</taxon>
        <taxon>Euteleostomi</taxon>
        <taxon>Mammalia</taxon>
        <taxon>Eutheria</taxon>
        <taxon>Euarchontoglires</taxon>
        <taxon>Primates</taxon>
        <taxon>Haplorrhini</taxon>
        <taxon>Catarrhini</taxon>
        <taxon>Cercopithecidae</taxon>
        <taxon>Cercopithecinae</taxon>
        <taxon>Macaca</taxon>
    </lineage>
</organism>
<comment type="function">
    <text evidence="1 3">Phosphatidylserine (PS) lipase that mediates the hydrolysis of phosphatidylserine to generate lysophosphatidylserine (LPS). LPS constitutes a class of signaling lipids that regulates immunological and neurological processes (By similarity). Has no activity towards diacylglycerol, triacylglycerol or lysophosphatidylserine lipase (By similarity). Also has monoacylglycerol lipase activity, with preference for 1-(9Z,12Z-octadecadienoyl)-glycerol (1-LG) and 2-glyceryl-15-deoxy-Delta(12,14)-prostaglandin J2 (15d-PGJ(2)-G) (By similarity).</text>
</comment>
<comment type="catalytic activity">
    <reaction evidence="3">
        <text>1-heptadecanoyl-2-(5Z,8Z,11Z,14Z-eicosatetraenoyl)-sn-glycero-3-phosphoserine + H2O = 1-heptadecanoyl-sn-glycero-3-phosphoserine + (5Z,8Z,11Z,14Z)-eicosatetraenoate + H(+)</text>
        <dbReference type="Rhea" id="RHEA:44500"/>
        <dbReference type="ChEBI" id="CHEBI:15377"/>
        <dbReference type="ChEBI" id="CHEBI:15378"/>
        <dbReference type="ChEBI" id="CHEBI:32395"/>
        <dbReference type="ChEBI" id="CHEBI:84461"/>
        <dbReference type="ChEBI" id="CHEBI:84462"/>
    </reaction>
</comment>
<comment type="catalytic activity">
    <reaction evidence="3">
        <text>1-hexadecanoyl-2-(9Z-octadecenoyl)-sn-glycero-3-phospho-L-serine + H2O = 1-hexadecanoyl-sn-glycero-3-phospho-L-serine + (9Z)-octadecenoate + H(+)</text>
        <dbReference type="Rhea" id="RHEA:41752"/>
        <dbReference type="ChEBI" id="CHEBI:15377"/>
        <dbReference type="ChEBI" id="CHEBI:15378"/>
        <dbReference type="ChEBI" id="CHEBI:30823"/>
        <dbReference type="ChEBI" id="CHEBI:75020"/>
        <dbReference type="ChEBI" id="CHEBI:75029"/>
    </reaction>
</comment>
<comment type="catalytic activity">
    <reaction evidence="3">
        <text>1-octadecanoyl-2-(9Z,12Z-octadecadienoyl)-sn-glycero-3-phosphoserine + H2O = 1-octadecanoyl-sn-glycero-3-phosphoserine + (9Z,12Z)-octadecadienoate + H(+)</text>
        <dbReference type="Rhea" id="RHEA:44516"/>
        <dbReference type="ChEBI" id="CHEBI:15377"/>
        <dbReference type="ChEBI" id="CHEBI:15378"/>
        <dbReference type="ChEBI" id="CHEBI:30245"/>
        <dbReference type="ChEBI" id="CHEBI:84466"/>
        <dbReference type="ChEBI" id="CHEBI:84467"/>
    </reaction>
</comment>
<comment type="catalytic activity">
    <reaction evidence="3">
        <text>1-heptadecanoyl-2-(5Z,8Z,11Z,14Z-eicosatetraenoyl)-sn-glycero-3-phosphocholine + H2O = 1-heptadecanoyl-sn-glycero-3-phosphocholine + (5Z,8Z,11Z,14Z)-eicosatetraenoate + H(+)</text>
        <dbReference type="Rhea" id="RHEA:44520"/>
        <dbReference type="ChEBI" id="CHEBI:15377"/>
        <dbReference type="ChEBI" id="CHEBI:15378"/>
        <dbReference type="ChEBI" id="CHEBI:32395"/>
        <dbReference type="ChEBI" id="CHEBI:74340"/>
        <dbReference type="ChEBI" id="CHEBI:84470"/>
    </reaction>
</comment>
<comment type="catalytic activity">
    <reaction evidence="3">
        <text>1-hexadecanoyl-2-(9Z-octadecenoyl)-sn-glycero-3-phosphoglycerol + H2O = 1-hexadecanoyl-sn-glycero-3-phosphoglycerol + (9Z)-octadecenoate + H(+)</text>
        <dbReference type="Rhea" id="RHEA:44524"/>
        <dbReference type="ChEBI" id="CHEBI:15377"/>
        <dbReference type="ChEBI" id="CHEBI:15378"/>
        <dbReference type="ChEBI" id="CHEBI:30823"/>
        <dbReference type="ChEBI" id="CHEBI:84472"/>
        <dbReference type="ChEBI" id="CHEBI:84475"/>
    </reaction>
</comment>
<comment type="catalytic activity">
    <reaction evidence="3">
        <text>1-hexadecanoyl-2-(9Z-octadecenoyl)-sn-glycero-3-phospho-(1D-myo-inositol) + H2O = 1-hexadecanoyl-sn-glycero-3-phospho-(1D-myo-inositol) + (9Z)-octadecenoate + H(+)</text>
        <dbReference type="Rhea" id="RHEA:44528"/>
        <dbReference type="ChEBI" id="CHEBI:15377"/>
        <dbReference type="ChEBI" id="CHEBI:15378"/>
        <dbReference type="ChEBI" id="CHEBI:30823"/>
        <dbReference type="ChEBI" id="CHEBI:72833"/>
        <dbReference type="ChEBI" id="CHEBI:72837"/>
    </reaction>
</comment>
<comment type="catalytic activity">
    <reaction evidence="3">
        <text>1-heptadecanoyl-2-(5Z,8Z,11Z,14Z-eicosatetraenoyl)-sn-glycero-3-phosphoethanolamine + H2O = 1-heptadecanoyl-sn-glycero-3-phosphoethanolamine + (5Z,8Z,11Z,14Z)-eicosatetraenoate + H(+)</text>
        <dbReference type="Rhea" id="RHEA:44540"/>
        <dbReference type="ChEBI" id="CHEBI:15377"/>
        <dbReference type="ChEBI" id="CHEBI:15378"/>
        <dbReference type="ChEBI" id="CHEBI:32395"/>
        <dbReference type="ChEBI" id="CHEBI:84489"/>
        <dbReference type="ChEBI" id="CHEBI:84490"/>
    </reaction>
</comment>
<comment type="catalytic activity">
    <reaction evidence="3">
        <text>1-hexadecanoyl-2-(9Z-octadecenoyl)-sn-glycero-3-phospho-(1'-sn-glycerol) + H2O = 1-hexadecanoyl-sn-glycero-3-phospho-(1'-sn-glycerol) + (9Z)-octadecenoate + H(+)</text>
        <dbReference type="Rhea" id="RHEA:40919"/>
        <dbReference type="ChEBI" id="CHEBI:15377"/>
        <dbReference type="ChEBI" id="CHEBI:15378"/>
        <dbReference type="ChEBI" id="CHEBI:30823"/>
        <dbReference type="ChEBI" id="CHEBI:72841"/>
        <dbReference type="ChEBI" id="CHEBI:75158"/>
    </reaction>
</comment>
<comment type="catalytic activity">
    <reaction evidence="1">
        <text>Hydrolyzes glycerol monoesters of long-chain fatty acids.</text>
        <dbReference type="EC" id="3.1.1.23"/>
    </reaction>
</comment>
<comment type="catalytic activity">
    <reaction evidence="1">
        <text>1-tetradecanoylglycerol + H2O = tetradecanoate + glycerol + H(+)</text>
        <dbReference type="Rhea" id="RHEA:44312"/>
        <dbReference type="ChEBI" id="CHEBI:15377"/>
        <dbReference type="ChEBI" id="CHEBI:15378"/>
        <dbReference type="ChEBI" id="CHEBI:17754"/>
        <dbReference type="ChEBI" id="CHEBI:30807"/>
        <dbReference type="ChEBI" id="CHEBI:75562"/>
    </reaction>
</comment>
<comment type="catalytic activity">
    <reaction evidence="1">
        <text>2-hexadecanoylglycerol + H2O = glycerol + hexadecanoate + H(+)</text>
        <dbReference type="Rhea" id="RHEA:39963"/>
        <dbReference type="ChEBI" id="CHEBI:7896"/>
        <dbReference type="ChEBI" id="CHEBI:15377"/>
        <dbReference type="ChEBI" id="CHEBI:15378"/>
        <dbReference type="ChEBI" id="CHEBI:17754"/>
        <dbReference type="ChEBI" id="CHEBI:75455"/>
    </reaction>
</comment>
<comment type="catalytic activity">
    <reaction evidence="1">
        <text>1-(9Z-octadecenoyl)-glycerol + H2O = glycerol + (9Z)-octadecenoate + H(+)</text>
        <dbReference type="Rhea" id="RHEA:38487"/>
        <dbReference type="ChEBI" id="CHEBI:15377"/>
        <dbReference type="ChEBI" id="CHEBI:15378"/>
        <dbReference type="ChEBI" id="CHEBI:17754"/>
        <dbReference type="ChEBI" id="CHEBI:30823"/>
        <dbReference type="ChEBI" id="CHEBI:75342"/>
    </reaction>
</comment>
<comment type="catalytic activity">
    <reaction evidence="1">
        <text>2-(9Z-octadecenoyl)-glycerol + H2O = glycerol + (9Z)-octadecenoate + H(+)</text>
        <dbReference type="Rhea" id="RHEA:38491"/>
        <dbReference type="ChEBI" id="CHEBI:15377"/>
        <dbReference type="ChEBI" id="CHEBI:15378"/>
        <dbReference type="ChEBI" id="CHEBI:17754"/>
        <dbReference type="ChEBI" id="CHEBI:30823"/>
        <dbReference type="ChEBI" id="CHEBI:73990"/>
    </reaction>
</comment>
<comment type="catalytic activity">
    <reaction evidence="1">
        <text>2-(9Z,12Z-octadecadienoyl)-glycerol + H2O = (9Z,12Z)-octadecadienoate + glycerol + H(+)</text>
        <dbReference type="Rhea" id="RHEA:44732"/>
        <dbReference type="ChEBI" id="CHEBI:15377"/>
        <dbReference type="ChEBI" id="CHEBI:15378"/>
        <dbReference type="ChEBI" id="CHEBI:17754"/>
        <dbReference type="ChEBI" id="CHEBI:30245"/>
        <dbReference type="ChEBI" id="CHEBI:75457"/>
    </reaction>
</comment>
<comment type="catalytic activity">
    <reaction evidence="1">
        <text>1-(5Z,8Z,11Z,14Z-eicosatetraenoyl)-glycerol + H2O = glycerol + (5Z,8Z,11Z,14Z)-eicosatetraenoate + H(+)</text>
        <dbReference type="Rhea" id="RHEA:44728"/>
        <dbReference type="ChEBI" id="CHEBI:15377"/>
        <dbReference type="ChEBI" id="CHEBI:15378"/>
        <dbReference type="ChEBI" id="CHEBI:17754"/>
        <dbReference type="ChEBI" id="CHEBI:32395"/>
        <dbReference type="ChEBI" id="CHEBI:75612"/>
    </reaction>
</comment>
<comment type="catalytic activity">
    <reaction evidence="1">
        <text>2-(5Z,8Z,11Z,14Z-eicosatetraenoyl)-glycerol + H2O = glycerol + (5Z,8Z,11Z,14Z)-eicosatetraenoate + H(+)</text>
        <dbReference type="Rhea" id="RHEA:26132"/>
        <dbReference type="ChEBI" id="CHEBI:15377"/>
        <dbReference type="ChEBI" id="CHEBI:15378"/>
        <dbReference type="ChEBI" id="CHEBI:17754"/>
        <dbReference type="ChEBI" id="CHEBI:32395"/>
        <dbReference type="ChEBI" id="CHEBI:52392"/>
    </reaction>
</comment>
<comment type="catalytic activity">
    <reaction evidence="1">
        <text>prostaglandin D2-1-glycerol ester + H2O = prostaglandin D2 + glycerol + H(+)</text>
        <dbReference type="Rhea" id="RHEA:45412"/>
        <dbReference type="ChEBI" id="CHEBI:15377"/>
        <dbReference type="ChEBI" id="CHEBI:15378"/>
        <dbReference type="ChEBI" id="CHEBI:17754"/>
        <dbReference type="ChEBI" id="CHEBI:57406"/>
        <dbReference type="ChEBI" id="CHEBI:85232"/>
    </reaction>
</comment>
<comment type="catalytic activity">
    <reaction evidence="3">
        <text>2-glyceryl-15-deoxy-Delta(12,14)-prostaglandin J2 + H2O = 15-deoxy-Delta(12,14)-prostaglandin J2 + glycerol + H(+)</text>
        <dbReference type="Rhea" id="RHEA:45416"/>
        <dbReference type="ChEBI" id="CHEBI:15377"/>
        <dbReference type="ChEBI" id="CHEBI:15378"/>
        <dbReference type="ChEBI" id="CHEBI:17754"/>
        <dbReference type="ChEBI" id="CHEBI:85236"/>
        <dbReference type="ChEBI" id="CHEBI:85238"/>
    </reaction>
</comment>
<comment type="catalytic activity">
    <reaction evidence="3">
        <text>1-(9Z,12Z-octadecadienoyl)-glycerol + H2O = (9Z,12Z)-octadecadienoate + glycerol + H(+)</text>
        <dbReference type="Rhea" id="RHEA:48428"/>
        <dbReference type="ChEBI" id="CHEBI:15377"/>
        <dbReference type="ChEBI" id="CHEBI:15378"/>
        <dbReference type="ChEBI" id="CHEBI:17754"/>
        <dbReference type="ChEBI" id="CHEBI:30245"/>
        <dbReference type="ChEBI" id="CHEBI:75568"/>
    </reaction>
</comment>
<comment type="subcellular location">
    <subcellularLocation>
        <location evidence="3">Membrane</location>
        <topology evidence="4">Multi-pass membrane protein</topology>
    </subcellularLocation>
</comment>
<comment type="similarity">
    <text evidence="6">Belongs to the AB hydrolase superfamily. ABHD16 family.</text>
</comment>
<proteinExistence type="evidence at transcript level"/>
<protein>
    <recommendedName>
        <fullName evidence="6">Phosphatidylserine lipase ABHD16A</fullName>
        <ecNumber evidence="3">3.1.-.-</ecNumber>
    </recommendedName>
    <alternativeName>
        <fullName evidence="6">Alpha/beta hydrolase domain-containing protein 16A</fullName>
        <shortName evidence="6">Abhydrolase domain-containing protein 16A</shortName>
    </alternativeName>
    <alternativeName>
        <fullName evidence="1">HLA-B-associated transcript 5 homolog</fullName>
    </alternativeName>
    <alternativeName>
        <fullName evidence="6">Monoacylglycerol lipase ABHD16A</fullName>
        <ecNumber evidence="1">3.1.1.23</ecNumber>
    </alternativeName>
</protein>
<sequence length="558" mass="63181">MAKLLSCVLGPRLYKIYRERDSERAPASVPETPTAVTAPHSSSWDTYYQPRALEKHADSILALASVFWSISYYSSPFAFFYLYRKGYLSLSKVVPFSHYAGTLLLLLAGVACLRGIGRWTNPQYRQFITILEATHRNQSSENKRQLANYNFDFRSWPVDFHWEEPSSRKESRGGPSRRGVALLRPEPLHRGTADTLLNRVKKLPCQITSYLVAHTLGRRMLYPGSVYLLQKALMPVLLQGQARLVEECNGRRAKLLACDGNEIDTMFVDRRGTAQPQGQKLVICCEGNAGFYEVGCISTPLEAGYSVLGWNHPGFAGSTGVPFPQNEANAMDVVVQFAIHRLGFQPQDIIIYAWSIGGFTATWAAMSYPDVSAVILDASFDDLVPLALKVMPDSWRGLVTRTVRQHLNLNNAEQLCRYLGPVLLIRRTKDEIITTTVPEDIMSNRGNDLLLKLLQHRYPRVMAEEGLQVVRQWLEASSQLEEASIYSRWEVEEDWCLSVLRSYQAEHGPDFPWSVGEDMSADGRRQLALFLARKHLHNFEATHCTPLPAQNFQMPWHL</sequence>
<dbReference type="EC" id="3.1.-.-" evidence="3"/>
<dbReference type="EC" id="3.1.1.23" evidence="1"/>
<dbReference type="EMBL" id="AB168411">
    <property type="protein sequence ID" value="BAE00532.1"/>
    <property type="molecule type" value="mRNA"/>
</dbReference>
<dbReference type="RefSeq" id="NP_001271025.1">
    <property type="nucleotide sequence ID" value="NM_001284096.1"/>
</dbReference>
<dbReference type="RefSeq" id="XP_045246084.1">
    <property type="nucleotide sequence ID" value="XM_045390149.2"/>
</dbReference>
<dbReference type="SMR" id="Q4R8P0"/>
<dbReference type="STRING" id="9541.ENSMFAP00000006419"/>
<dbReference type="ESTHER" id="macfa-q4r8p0">
    <property type="family name" value="ABHD16"/>
</dbReference>
<dbReference type="GeneID" id="101866118"/>
<dbReference type="eggNOG" id="KOG1553">
    <property type="taxonomic scope" value="Eukaryota"/>
</dbReference>
<dbReference type="Proteomes" id="UP000233100">
    <property type="component" value="Unplaced"/>
</dbReference>
<dbReference type="GO" id="GO:0012505">
    <property type="term" value="C:endomembrane system"/>
    <property type="evidence" value="ECO:0007669"/>
    <property type="project" value="TreeGrafter"/>
</dbReference>
<dbReference type="GO" id="GO:0016020">
    <property type="term" value="C:membrane"/>
    <property type="evidence" value="ECO:0007669"/>
    <property type="project" value="UniProtKB-SubCell"/>
</dbReference>
<dbReference type="GO" id="GO:0047372">
    <property type="term" value="F:monoacylglycerol lipase activity"/>
    <property type="evidence" value="ECO:0000250"/>
    <property type="project" value="UniProtKB"/>
</dbReference>
<dbReference type="GO" id="GO:0004620">
    <property type="term" value="F:phospholipase activity"/>
    <property type="evidence" value="ECO:0000250"/>
    <property type="project" value="UniProtKB"/>
</dbReference>
<dbReference type="GO" id="GO:0052651">
    <property type="term" value="P:monoacylglycerol catabolic process"/>
    <property type="evidence" value="ECO:0000250"/>
    <property type="project" value="UniProtKB"/>
</dbReference>
<dbReference type="GO" id="GO:0006660">
    <property type="term" value="P:phosphatidylserine catabolic process"/>
    <property type="evidence" value="ECO:0000250"/>
    <property type="project" value="UniProtKB"/>
</dbReference>
<dbReference type="FunFam" id="3.40.50.1820:FF:000074">
    <property type="entry name" value="Abhydrolase domain containing 16A"/>
    <property type="match status" value="1"/>
</dbReference>
<dbReference type="Gene3D" id="3.40.50.1820">
    <property type="entry name" value="alpha/beta hydrolase"/>
    <property type="match status" value="1"/>
</dbReference>
<dbReference type="InterPro" id="IPR000073">
    <property type="entry name" value="AB_hydrolase_1"/>
</dbReference>
<dbReference type="InterPro" id="IPR029058">
    <property type="entry name" value="AB_hydrolase_fold"/>
</dbReference>
<dbReference type="InterPro" id="IPR054518">
    <property type="entry name" value="ABHD16_N"/>
</dbReference>
<dbReference type="PANTHER" id="PTHR12277">
    <property type="entry name" value="ALPHA/BETA HYDROLASE DOMAIN-CONTAINING PROTEIN"/>
    <property type="match status" value="1"/>
</dbReference>
<dbReference type="PANTHER" id="PTHR12277:SF54">
    <property type="entry name" value="PHOSPHATIDYLSERINE LIPASE ABHD16A"/>
    <property type="match status" value="1"/>
</dbReference>
<dbReference type="Pfam" id="PF22990">
    <property type="entry name" value="ABHD16_N"/>
    <property type="match status" value="1"/>
</dbReference>
<dbReference type="Pfam" id="PF00561">
    <property type="entry name" value="Abhydrolase_1"/>
    <property type="match status" value="1"/>
</dbReference>
<dbReference type="SUPFAM" id="SSF53474">
    <property type="entry name" value="alpha/beta-Hydrolases"/>
    <property type="match status" value="1"/>
</dbReference>
<evidence type="ECO:0000250" key="1">
    <source>
        <dbReference type="UniProtKB" id="O95870"/>
    </source>
</evidence>
<evidence type="ECO:0000250" key="2">
    <source>
        <dbReference type="UniProtKB" id="Q8N2K0"/>
    </source>
</evidence>
<evidence type="ECO:0000250" key="3">
    <source>
        <dbReference type="UniProtKB" id="Q9Z1Q2"/>
    </source>
</evidence>
<evidence type="ECO:0000255" key="4"/>
<evidence type="ECO:0000303" key="5">
    <source ref="1"/>
</evidence>
<evidence type="ECO:0000305" key="6"/>
<feature type="chain" id="PRO_0000333742" description="Phosphatidylserine lipase ABHD16A">
    <location>
        <begin position="1"/>
        <end position="558"/>
    </location>
</feature>
<feature type="transmembrane region" description="Helical" evidence="4">
    <location>
        <begin position="60"/>
        <end position="80"/>
    </location>
</feature>
<feature type="transmembrane region" description="Helical" evidence="4">
    <location>
        <begin position="93"/>
        <end position="113"/>
    </location>
</feature>
<feature type="topological domain" description="Cytoplasmic" evidence="3">
    <location>
        <begin position="114"/>
        <end position="558"/>
    </location>
</feature>
<feature type="domain" description="AB hydrolase-1" evidence="4">
    <location>
        <begin position="281"/>
        <end position="407"/>
    </location>
</feature>
<feature type="active site" description="Charge relay system" evidence="2">
    <location>
        <position position="355"/>
    </location>
</feature>
<feature type="active site" description="Charge relay system" evidence="2">
    <location>
        <position position="430"/>
    </location>
</feature>
<feature type="active site" description="Charge relay system" evidence="2">
    <location>
        <position position="507"/>
    </location>
</feature>